<name>RS3_SACD2</name>
<proteinExistence type="inferred from homology"/>
<comment type="function">
    <text evidence="1">Binds the lower part of the 30S subunit head. Binds mRNA in the 70S ribosome, positioning it for translation.</text>
</comment>
<comment type="subunit">
    <text evidence="1">Part of the 30S ribosomal subunit. Forms a tight complex with proteins S10 and S14.</text>
</comment>
<comment type="similarity">
    <text evidence="1">Belongs to the universal ribosomal protein uS3 family.</text>
</comment>
<reference key="1">
    <citation type="journal article" date="2008" name="PLoS Genet.">
        <title>Complete genome sequence of the complex carbohydrate-degrading marine bacterium, Saccharophagus degradans strain 2-40 T.</title>
        <authorList>
            <person name="Weiner R.M."/>
            <person name="Taylor L.E. II"/>
            <person name="Henrissat B."/>
            <person name="Hauser L."/>
            <person name="Land M."/>
            <person name="Coutinho P.M."/>
            <person name="Rancurel C."/>
            <person name="Saunders E.H."/>
            <person name="Longmire A.G."/>
            <person name="Zhang H."/>
            <person name="Bayer E.A."/>
            <person name="Gilbert H.J."/>
            <person name="Larimer F."/>
            <person name="Zhulin I.B."/>
            <person name="Ekborg N.A."/>
            <person name="Lamed R."/>
            <person name="Richardson P.M."/>
            <person name="Borovok I."/>
            <person name="Hutcheson S."/>
        </authorList>
    </citation>
    <scope>NUCLEOTIDE SEQUENCE [LARGE SCALE GENOMIC DNA]</scope>
    <source>
        <strain>2-40 / ATCC 43961 / DSM 17024</strain>
    </source>
</reference>
<feature type="chain" id="PRO_0000293875" description="Small ribosomal subunit protein uS3">
    <location>
        <begin position="1"/>
        <end position="224"/>
    </location>
</feature>
<feature type="domain" description="KH type-2" evidence="1">
    <location>
        <begin position="39"/>
        <end position="107"/>
    </location>
</feature>
<gene>
    <name evidence="1" type="primary">rpsC</name>
    <name type="ordered locus">Sde_0966</name>
</gene>
<organism>
    <name type="scientific">Saccharophagus degradans (strain 2-40 / ATCC 43961 / DSM 17024)</name>
    <dbReference type="NCBI Taxonomy" id="203122"/>
    <lineage>
        <taxon>Bacteria</taxon>
        <taxon>Pseudomonadati</taxon>
        <taxon>Pseudomonadota</taxon>
        <taxon>Gammaproteobacteria</taxon>
        <taxon>Cellvibrionales</taxon>
        <taxon>Cellvibrionaceae</taxon>
        <taxon>Saccharophagus</taxon>
    </lineage>
</organism>
<accession>Q21M51</accession>
<protein>
    <recommendedName>
        <fullName evidence="1">Small ribosomal subunit protein uS3</fullName>
    </recommendedName>
    <alternativeName>
        <fullName evidence="2">30S ribosomal protein S3</fullName>
    </alternativeName>
</protein>
<dbReference type="EMBL" id="CP000282">
    <property type="protein sequence ID" value="ABD80228.1"/>
    <property type="molecule type" value="Genomic_DNA"/>
</dbReference>
<dbReference type="RefSeq" id="WP_011467448.1">
    <property type="nucleotide sequence ID" value="NC_007912.1"/>
</dbReference>
<dbReference type="SMR" id="Q21M51"/>
<dbReference type="STRING" id="203122.Sde_0966"/>
<dbReference type="GeneID" id="98612651"/>
<dbReference type="KEGG" id="sde:Sde_0966"/>
<dbReference type="eggNOG" id="COG0092">
    <property type="taxonomic scope" value="Bacteria"/>
</dbReference>
<dbReference type="HOGENOM" id="CLU_058591_0_2_6"/>
<dbReference type="OrthoDB" id="9806396at2"/>
<dbReference type="Proteomes" id="UP000001947">
    <property type="component" value="Chromosome"/>
</dbReference>
<dbReference type="GO" id="GO:0022627">
    <property type="term" value="C:cytosolic small ribosomal subunit"/>
    <property type="evidence" value="ECO:0007669"/>
    <property type="project" value="TreeGrafter"/>
</dbReference>
<dbReference type="GO" id="GO:0003729">
    <property type="term" value="F:mRNA binding"/>
    <property type="evidence" value="ECO:0007669"/>
    <property type="project" value="UniProtKB-UniRule"/>
</dbReference>
<dbReference type="GO" id="GO:0019843">
    <property type="term" value="F:rRNA binding"/>
    <property type="evidence" value="ECO:0007669"/>
    <property type="project" value="UniProtKB-UniRule"/>
</dbReference>
<dbReference type="GO" id="GO:0003735">
    <property type="term" value="F:structural constituent of ribosome"/>
    <property type="evidence" value="ECO:0007669"/>
    <property type="project" value="InterPro"/>
</dbReference>
<dbReference type="GO" id="GO:0006412">
    <property type="term" value="P:translation"/>
    <property type="evidence" value="ECO:0007669"/>
    <property type="project" value="UniProtKB-UniRule"/>
</dbReference>
<dbReference type="CDD" id="cd02412">
    <property type="entry name" value="KH-II_30S_S3"/>
    <property type="match status" value="1"/>
</dbReference>
<dbReference type="FunFam" id="3.30.1140.32:FF:000001">
    <property type="entry name" value="30S ribosomal protein S3"/>
    <property type="match status" value="1"/>
</dbReference>
<dbReference type="FunFam" id="3.30.300.20:FF:000001">
    <property type="entry name" value="30S ribosomal protein S3"/>
    <property type="match status" value="1"/>
</dbReference>
<dbReference type="Gene3D" id="3.30.300.20">
    <property type="match status" value="1"/>
</dbReference>
<dbReference type="Gene3D" id="3.30.1140.32">
    <property type="entry name" value="Ribosomal protein S3, C-terminal domain"/>
    <property type="match status" value="1"/>
</dbReference>
<dbReference type="HAMAP" id="MF_01309_B">
    <property type="entry name" value="Ribosomal_uS3_B"/>
    <property type="match status" value="1"/>
</dbReference>
<dbReference type="InterPro" id="IPR004087">
    <property type="entry name" value="KH_dom"/>
</dbReference>
<dbReference type="InterPro" id="IPR015946">
    <property type="entry name" value="KH_dom-like_a/b"/>
</dbReference>
<dbReference type="InterPro" id="IPR004044">
    <property type="entry name" value="KH_dom_type_2"/>
</dbReference>
<dbReference type="InterPro" id="IPR009019">
    <property type="entry name" value="KH_sf_prok-type"/>
</dbReference>
<dbReference type="InterPro" id="IPR036419">
    <property type="entry name" value="Ribosomal_S3_C_sf"/>
</dbReference>
<dbReference type="InterPro" id="IPR005704">
    <property type="entry name" value="Ribosomal_uS3_bac-typ"/>
</dbReference>
<dbReference type="InterPro" id="IPR001351">
    <property type="entry name" value="Ribosomal_uS3_C"/>
</dbReference>
<dbReference type="InterPro" id="IPR018280">
    <property type="entry name" value="Ribosomal_uS3_CS"/>
</dbReference>
<dbReference type="NCBIfam" id="TIGR01009">
    <property type="entry name" value="rpsC_bact"/>
    <property type="match status" value="1"/>
</dbReference>
<dbReference type="PANTHER" id="PTHR11760">
    <property type="entry name" value="30S/40S RIBOSOMAL PROTEIN S3"/>
    <property type="match status" value="1"/>
</dbReference>
<dbReference type="PANTHER" id="PTHR11760:SF19">
    <property type="entry name" value="SMALL RIBOSOMAL SUBUNIT PROTEIN US3C"/>
    <property type="match status" value="1"/>
</dbReference>
<dbReference type="Pfam" id="PF07650">
    <property type="entry name" value="KH_2"/>
    <property type="match status" value="1"/>
</dbReference>
<dbReference type="Pfam" id="PF00189">
    <property type="entry name" value="Ribosomal_S3_C"/>
    <property type="match status" value="1"/>
</dbReference>
<dbReference type="SMART" id="SM00322">
    <property type="entry name" value="KH"/>
    <property type="match status" value="1"/>
</dbReference>
<dbReference type="SUPFAM" id="SSF54814">
    <property type="entry name" value="Prokaryotic type KH domain (KH-domain type II)"/>
    <property type="match status" value="1"/>
</dbReference>
<dbReference type="SUPFAM" id="SSF54821">
    <property type="entry name" value="Ribosomal protein S3 C-terminal domain"/>
    <property type="match status" value="1"/>
</dbReference>
<dbReference type="PROSITE" id="PS50823">
    <property type="entry name" value="KH_TYPE_2"/>
    <property type="match status" value="1"/>
</dbReference>
<dbReference type="PROSITE" id="PS00548">
    <property type="entry name" value="RIBOSOMAL_S3"/>
    <property type="match status" value="1"/>
</dbReference>
<sequence>MGQKVHPTGIRLGIVKKHTSTWYAGKAEYADKLNQDLQVRKYIQNALAHASVSRIDIERPANTARVTIHTARPGIVIGKKGEDVEKLRTELTKQMGVPVHINIEEIRKPDLDAALAAQSVAQQLERRVMFRRAMKRTVQNAMRQGAEGVKVQVGGRLGGAEIARSEWYREGRVPLHTLRADIDYATAEASTTYGIIGVKVWIFKGEIIGGIEEVEANQKKKGSK</sequence>
<keyword id="KW-1185">Reference proteome</keyword>
<keyword id="KW-0687">Ribonucleoprotein</keyword>
<keyword id="KW-0689">Ribosomal protein</keyword>
<keyword id="KW-0694">RNA-binding</keyword>
<keyword id="KW-0699">rRNA-binding</keyword>
<evidence type="ECO:0000255" key="1">
    <source>
        <dbReference type="HAMAP-Rule" id="MF_01309"/>
    </source>
</evidence>
<evidence type="ECO:0000305" key="2"/>